<keyword id="KW-0002">3D-structure</keyword>
<keyword id="KW-0007">Acetylation</keyword>
<keyword id="KW-0010">Activator</keyword>
<keyword id="KW-0025">Alternative splicing</keyword>
<keyword id="KW-0090">Biological rhythms</keyword>
<keyword id="KW-0903">Direct protein sequencing</keyword>
<keyword id="KW-0238">DNA-binding</keyword>
<keyword id="KW-1017">Isopeptide bond</keyword>
<keyword id="KW-0479">Metal-binding</keyword>
<keyword id="KW-0539">Nucleus</keyword>
<keyword id="KW-0597">Phosphoprotein</keyword>
<keyword id="KW-0675">Receptor</keyword>
<keyword id="KW-1185">Reference proteome</keyword>
<keyword id="KW-0678">Repressor</keyword>
<keyword id="KW-0804">Transcription</keyword>
<keyword id="KW-0805">Transcription regulation</keyword>
<keyword id="KW-0832">Ubl conjugation</keyword>
<keyword id="KW-0862">Zinc</keyword>
<keyword id="KW-0863">Zinc-finger</keyword>
<organism>
    <name type="scientific">Rattus norvegicus</name>
    <name type="common">Rat</name>
    <dbReference type="NCBI Taxonomy" id="10116"/>
    <lineage>
        <taxon>Eukaryota</taxon>
        <taxon>Metazoa</taxon>
        <taxon>Chordata</taxon>
        <taxon>Craniata</taxon>
        <taxon>Vertebrata</taxon>
        <taxon>Euteleostomi</taxon>
        <taxon>Mammalia</taxon>
        <taxon>Eutheria</taxon>
        <taxon>Euarchontoglires</taxon>
        <taxon>Glires</taxon>
        <taxon>Rodentia</taxon>
        <taxon>Myomorpha</taxon>
        <taxon>Muroidea</taxon>
        <taxon>Muridae</taxon>
        <taxon>Murinae</taxon>
        <taxon>Rattus</taxon>
    </lineage>
</organism>
<protein>
    <recommendedName>
        <fullName>Hepatocyte nuclear factor 4-alpha</fullName>
        <shortName>HNF-4-alpha</shortName>
    </recommendedName>
    <alternativeName>
        <fullName>Nuclear receptor subfamily 2 group A member 1</fullName>
    </alternativeName>
    <alternativeName>
        <fullName>Transcription factor 14</fullName>
        <shortName>TCF-14</shortName>
    </alternativeName>
    <alternativeName>
        <fullName>Transcription factor HNF-4</fullName>
    </alternativeName>
</protein>
<accession>P22449</accession>
<accession>A2ICG9</accession>
<proteinExistence type="evidence at protein level"/>
<feature type="chain" id="PRO_0000053560" description="Hepatocyte nuclear factor 4-alpha">
    <location>
        <begin position="1"/>
        <end position="474"/>
    </location>
</feature>
<feature type="domain" description="NR LBD" evidence="5">
    <location>
        <begin position="147"/>
        <end position="377"/>
    </location>
</feature>
<feature type="DNA-binding region" description="Nuclear receptor" evidence="4">
    <location>
        <begin position="57"/>
        <end position="132"/>
    </location>
</feature>
<feature type="zinc finger region" description="NR C4-type" evidence="4">
    <location>
        <begin position="60"/>
        <end position="80"/>
    </location>
</feature>
<feature type="zinc finger region" description="NR C4-type" evidence="4">
    <location>
        <begin position="96"/>
        <end position="120"/>
    </location>
</feature>
<feature type="region of interest" description="Disordered" evidence="6">
    <location>
        <begin position="413"/>
        <end position="450"/>
    </location>
</feature>
<feature type="short sequence motif" description="9aaTAD" evidence="2">
    <location>
        <begin position="368"/>
        <end position="376"/>
    </location>
</feature>
<feature type="modified residue" description="Phosphoserine; by PKA" evidence="12">
    <location>
        <position position="142"/>
    </location>
</feature>
<feature type="modified residue" description="Phosphoserine; by PKA" evidence="12">
    <location>
        <position position="143"/>
    </location>
</feature>
<feature type="modified residue" description="Phosphotyrosine" evidence="2">
    <location>
        <position position="144"/>
    </location>
</feature>
<feature type="modified residue" description="Phosphothreonine" evidence="2">
    <location>
        <position position="166"/>
    </location>
</feature>
<feature type="modified residue" description="Phosphoserine" evidence="2">
    <location>
        <position position="167"/>
    </location>
</feature>
<feature type="modified residue" description="Phosphoserine; by AMPK" evidence="2">
    <location>
        <position position="313"/>
    </location>
</feature>
<feature type="modified residue" description="Phosphothreonine" evidence="2">
    <location>
        <position position="429"/>
    </location>
</feature>
<feature type="modified residue" description="Phosphothreonine" evidence="13">
    <location>
        <position position="432"/>
    </location>
</feature>
<feature type="modified residue" description="Phosphoserine" evidence="13">
    <location>
        <position position="436"/>
    </location>
</feature>
<feature type="modified residue" description="N6-acetyllysine" evidence="2">
    <location>
        <position position="458"/>
    </location>
</feature>
<feature type="cross-link" description="Glycyl lysine isopeptide (Lys-Gly) (interchain with G-Cter in ubiquitin)" evidence="2">
    <location>
        <position position="234"/>
    </location>
</feature>
<feature type="cross-link" description="Glycyl lysine isopeptide (Lys-Gly) (interchain with G-Cter in ubiquitin)" evidence="2">
    <location>
        <position position="307"/>
    </location>
</feature>
<feature type="splice variant" id="VSP_003677" description="In isoform Short." evidence="9 10">
    <original>CEWPRPRGQAA</original>
    <variation>S</variation>
    <location>
        <begin position="418"/>
        <end position="428"/>
    </location>
</feature>
<feature type="mutagenesis site" description="Loss of phosphorylation, no effect on DNA-binding." evidence="8">
    <original>SS</original>
    <variation>AG</variation>
    <location>
        <begin position="142"/>
        <end position="143"/>
    </location>
</feature>
<feature type="mutagenesis site" description="Loss of phosphorylation, no effect on DNA-binding." evidence="8">
    <original>SS</original>
    <variation>LE</variation>
    <location>
        <begin position="142"/>
        <end position="143"/>
    </location>
</feature>
<feature type="sequence conflict" description="In Ref. 1; CAA40412." evidence="11" ref="1">
    <original>K</original>
    <variation>R</variation>
    <location>
        <position position="180"/>
    </location>
</feature>
<feature type="sequence conflict" description="In Ref. 1; CAA40412." evidence="11" ref="1">
    <original>N</original>
    <variation>S</variation>
    <location>
        <position position="183"/>
    </location>
</feature>
<feature type="sequence conflict" description="In Ref. 3; ABM69090." evidence="11" ref="3">
    <original>S</original>
    <variation>L</variation>
    <location>
        <position position="378"/>
    </location>
</feature>
<feature type="helix" evidence="14">
    <location>
        <begin position="152"/>
        <end position="164"/>
    </location>
</feature>
<feature type="helix" evidence="14">
    <location>
        <begin position="184"/>
        <end position="203"/>
    </location>
</feature>
<feature type="helix" evidence="14">
    <location>
        <begin position="206"/>
        <end position="209"/>
    </location>
</feature>
<feature type="helix" evidence="14">
    <location>
        <begin position="213"/>
        <end position="222"/>
    </location>
</feature>
<feature type="helix" evidence="14">
    <location>
        <begin position="224"/>
        <end position="234"/>
    </location>
</feature>
<feature type="turn" evidence="14">
    <location>
        <begin position="235"/>
        <end position="238"/>
    </location>
</feature>
<feature type="strand" evidence="14">
    <location>
        <begin position="239"/>
        <end position="244"/>
    </location>
</feature>
<feature type="strand" evidence="14">
    <location>
        <begin position="250"/>
        <end position="254"/>
    </location>
</feature>
<feature type="helix" evidence="14">
    <location>
        <begin position="256"/>
        <end position="258"/>
    </location>
</feature>
<feature type="turn" evidence="14">
    <location>
        <begin position="259"/>
        <end position="261"/>
    </location>
</feature>
<feature type="helix" evidence="14">
    <location>
        <begin position="262"/>
        <end position="271"/>
    </location>
</feature>
<feature type="helix" evidence="14">
    <location>
        <begin position="273"/>
        <end position="279"/>
    </location>
</feature>
<feature type="helix" evidence="14">
    <location>
        <begin position="283"/>
        <end position="294"/>
    </location>
</feature>
<feature type="helix" evidence="14">
    <location>
        <begin position="305"/>
        <end position="324"/>
    </location>
</feature>
<feature type="strand" evidence="14">
    <location>
        <begin position="326"/>
        <end position="328"/>
    </location>
</feature>
<feature type="helix" evidence="14">
    <location>
        <begin position="333"/>
        <end position="338"/>
    </location>
</feature>
<feature type="helix" evidence="14">
    <location>
        <begin position="341"/>
        <end position="360"/>
    </location>
</feature>
<feature type="helix" evidence="14">
    <location>
        <begin position="368"/>
        <end position="373"/>
    </location>
</feature>
<reference key="1">
    <citation type="journal article" date="1990" name="Genes Dev.">
        <title>Liver-enriched transcription factor HNF-4 is a novel member of the steroid hormone receptor superfamily.</title>
        <authorList>
            <person name="Sladek F.M."/>
            <person name="Zhong W."/>
            <person name="Lai E."/>
            <person name="Darnell J.E. Jr."/>
        </authorList>
    </citation>
    <scope>NUCLEOTIDE SEQUENCE [MRNA] (ISOFORM LONG)</scope>
    <scope>PARTIAL PROTEIN SEQUENCE</scope>
    <source>
        <tissue>Liver</tissue>
    </source>
</reference>
<reference key="2">
    <citation type="journal article" date="1992" name="Biochim. Biophys. Acta">
        <title>A novel isoform of rat hepatocyte nuclear factor 4 (HNF-4).</title>
        <authorList>
            <person name="Hata S."/>
            <person name="Tsukamoto T."/>
            <person name="Osumi T."/>
        </authorList>
    </citation>
    <scope>NUCLEOTIDE SEQUENCE [MRNA] (ISOFORM SHORT)</scope>
    <scope>ALTERNATIVE SPLICING</scope>
    <source>
        <strain>Wistar</strain>
        <tissue>Liver</tissue>
    </source>
</reference>
<reference key="3">
    <citation type="submission" date="2006-12" db="EMBL/GenBank/DDBJ databases">
        <title>Expression of HNF4 alpha 3 in pancreatic islets and Ins-1 beta cells.</title>
        <authorList>
            <person name="Huang J."/>
            <person name="Karakucuk V."/>
            <person name="Levitsky L.L."/>
            <person name="Rhoads D.B."/>
        </authorList>
    </citation>
    <scope>NUCLEOTIDE SEQUENCE [MRNA] OF 21-378 (ISOFORMS LONG AND SHORT)</scope>
    <source>
        <strain>New England Deaconess Hospital</strain>
        <tissue>Liver</tissue>
    </source>
</reference>
<reference key="4">
    <citation type="journal article" date="1997" name="Mol. Cell. Biol.">
        <title>Protein kinase A-dependent phosphorylation modulates DNA-binding activity of hepatocyte nuclear factor 4.</title>
        <authorList>
            <person name="Viollet B."/>
            <person name="Kahn A."/>
            <person name="Raymondjean M."/>
        </authorList>
    </citation>
    <scope>MUTAGENESIS</scope>
    <scope>PHOSPHORYLATION AT SER-142 AND SER-143</scope>
</reference>
<reference key="5">
    <citation type="journal article" date="2012" name="Nat. Commun.">
        <title>Quantitative maps of protein phosphorylation sites across 14 different rat organs and tissues.</title>
        <authorList>
            <person name="Lundby A."/>
            <person name="Secher A."/>
            <person name="Lage K."/>
            <person name="Nordsborg N.B."/>
            <person name="Dmytriyev A."/>
            <person name="Lundby C."/>
            <person name="Olsen J.V."/>
        </authorList>
    </citation>
    <scope>PHOSPHORYLATION [LARGE SCALE ANALYSIS] AT THR-432 AND SER-436</scope>
    <scope>IDENTIFICATION BY MASS SPECTROMETRY [LARGE SCALE ANALYSIS]</scope>
</reference>
<reference key="6">
    <citation type="journal article" date="2002" name="J. Biol. Chem.">
        <title>Crystal structure of the HNF4 alpha ligand binding domain in complex with endogenous fatty acid ligand.</title>
        <authorList>
            <person name="Dhe-Paganon S."/>
            <person name="Duda K."/>
            <person name="Iwamoto M."/>
            <person name="Chi Y.I."/>
            <person name="Shoelson S.E."/>
        </authorList>
    </citation>
    <scope>X-RAY CRYSTALLOGRAPHY (2.8 ANGSTROMS) OF 142-391</scope>
    <scope>FATTY ACID BINDING</scope>
    <scope>SUBUNIT</scope>
</reference>
<dbReference type="EMBL" id="D10554">
    <property type="protein sequence ID" value="BAA01411.1"/>
    <property type="status" value="ALT_INIT"/>
    <property type="molecule type" value="mRNA"/>
</dbReference>
<dbReference type="EMBL" id="X57133">
    <property type="protein sequence ID" value="CAA40412.1"/>
    <property type="status" value="ALT_INIT"/>
    <property type="molecule type" value="mRNA"/>
</dbReference>
<dbReference type="EMBL" id="EF193392">
    <property type="protein sequence ID" value="ABM69090.1"/>
    <property type="molecule type" value="mRNA"/>
</dbReference>
<dbReference type="PIR" id="A36471">
    <property type="entry name" value="A36471"/>
</dbReference>
<dbReference type="PIR" id="S23502">
    <property type="entry name" value="S23502"/>
</dbReference>
<dbReference type="RefSeq" id="NP_071516.2">
    <property type="nucleotide sequence ID" value="NM_022180.2"/>
</dbReference>
<dbReference type="PDB" id="1M7W">
    <property type="method" value="X-ray"/>
    <property type="resolution" value="2.80 A"/>
    <property type="chains" value="A/B/C/D=142-391"/>
</dbReference>
<dbReference type="PDBsum" id="1M7W"/>
<dbReference type="SMR" id="P22449"/>
<dbReference type="BioGRID" id="247763">
    <property type="interactions" value="1"/>
</dbReference>
<dbReference type="FunCoup" id="P22449">
    <property type="interactions" value="76"/>
</dbReference>
<dbReference type="IntAct" id="P22449">
    <property type="interactions" value="2"/>
</dbReference>
<dbReference type="MINT" id="P22449"/>
<dbReference type="STRING" id="10116.ENSRNOP00000071432"/>
<dbReference type="ChEMBL" id="CHEMBL3714705"/>
<dbReference type="iPTMnet" id="P22449"/>
<dbReference type="PhosphoSitePlus" id="P22449"/>
<dbReference type="PaxDb" id="10116-ENSRNOP00000011978"/>
<dbReference type="GeneID" id="25735"/>
<dbReference type="KEGG" id="rno:25735"/>
<dbReference type="AGR" id="RGD:2810"/>
<dbReference type="CTD" id="3172"/>
<dbReference type="RGD" id="2810">
    <property type="gene designation" value="Hnf4a"/>
</dbReference>
<dbReference type="eggNOG" id="KOG4215">
    <property type="taxonomic scope" value="Eukaryota"/>
</dbReference>
<dbReference type="InParanoid" id="P22449"/>
<dbReference type="PhylomeDB" id="P22449"/>
<dbReference type="Reactome" id="R-RNO-383280">
    <property type="pathway name" value="Nuclear Receptor transcription pathway"/>
</dbReference>
<dbReference type="EvolutionaryTrace" id="P22449"/>
<dbReference type="PRO" id="PR:P22449"/>
<dbReference type="Proteomes" id="UP000002494">
    <property type="component" value="Unplaced"/>
</dbReference>
<dbReference type="GO" id="GO:0005737">
    <property type="term" value="C:cytoplasm"/>
    <property type="evidence" value="ECO:0000266"/>
    <property type="project" value="RGD"/>
</dbReference>
<dbReference type="GO" id="GO:0005634">
    <property type="term" value="C:nucleus"/>
    <property type="evidence" value="ECO:0000314"/>
    <property type="project" value="BHF-UCL"/>
</dbReference>
<dbReference type="GO" id="GO:0050544">
    <property type="term" value="F:arachidonate binding"/>
    <property type="evidence" value="ECO:0000314"/>
    <property type="project" value="RGD"/>
</dbReference>
<dbReference type="GO" id="GO:0003682">
    <property type="term" value="F:chromatin binding"/>
    <property type="evidence" value="ECO:0000266"/>
    <property type="project" value="RGD"/>
</dbReference>
<dbReference type="GO" id="GO:0000987">
    <property type="term" value="F:cis-regulatory region sequence-specific DNA binding"/>
    <property type="evidence" value="ECO:0000314"/>
    <property type="project" value="RGD"/>
</dbReference>
<dbReference type="GO" id="GO:0003677">
    <property type="term" value="F:DNA binding"/>
    <property type="evidence" value="ECO:0000266"/>
    <property type="project" value="RGD"/>
</dbReference>
<dbReference type="GO" id="GO:0001228">
    <property type="term" value="F:DNA-binding transcription activator activity, RNA polymerase II-specific"/>
    <property type="evidence" value="ECO:0000314"/>
    <property type="project" value="BHF-UCL"/>
</dbReference>
<dbReference type="GO" id="GO:0003700">
    <property type="term" value="F:DNA-binding transcription factor activity"/>
    <property type="evidence" value="ECO:0000266"/>
    <property type="project" value="RGD"/>
</dbReference>
<dbReference type="GO" id="GO:0000981">
    <property type="term" value="F:DNA-binding transcription factor activity, RNA polymerase II-specific"/>
    <property type="evidence" value="ECO:0000266"/>
    <property type="project" value="RGD"/>
</dbReference>
<dbReference type="GO" id="GO:0005504">
    <property type="term" value="F:fatty acid binding"/>
    <property type="evidence" value="ECO:0000353"/>
    <property type="project" value="RGD"/>
</dbReference>
<dbReference type="GO" id="GO:0000062">
    <property type="term" value="F:fatty-acyl-CoA binding"/>
    <property type="evidence" value="ECO:0000353"/>
    <property type="project" value="RGD"/>
</dbReference>
<dbReference type="GO" id="GO:0036042">
    <property type="term" value="F:long-chain fatty acyl-CoA binding"/>
    <property type="evidence" value="ECO:0000314"/>
    <property type="project" value="RGD"/>
</dbReference>
<dbReference type="GO" id="GO:0052816">
    <property type="term" value="F:long-chain fatty acyl-CoA hydrolase activity"/>
    <property type="evidence" value="ECO:0000314"/>
    <property type="project" value="RGD"/>
</dbReference>
<dbReference type="GO" id="GO:0004879">
    <property type="term" value="F:nuclear receptor activity"/>
    <property type="evidence" value="ECO:0000266"/>
    <property type="project" value="RGD"/>
</dbReference>
<dbReference type="GO" id="GO:0019904">
    <property type="term" value="F:protein domain specific binding"/>
    <property type="evidence" value="ECO:0000353"/>
    <property type="project" value="RGD"/>
</dbReference>
<dbReference type="GO" id="GO:0042803">
    <property type="term" value="F:protein homodimerization activity"/>
    <property type="evidence" value="ECO:0000266"/>
    <property type="project" value="RGD"/>
</dbReference>
<dbReference type="GO" id="GO:0044877">
    <property type="term" value="F:protein-containing complex binding"/>
    <property type="evidence" value="ECO:0000314"/>
    <property type="project" value="RGD"/>
</dbReference>
<dbReference type="GO" id="GO:0000978">
    <property type="term" value="F:RNA polymerase II cis-regulatory region sequence-specific DNA binding"/>
    <property type="evidence" value="ECO:0000266"/>
    <property type="project" value="RGD"/>
</dbReference>
<dbReference type="GO" id="GO:0061629">
    <property type="term" value="F:RNA polymerase II-specific DNA-binding transcription factor binding"/>
    <property type="evidence" value="ECO:0000266"/>
    <property type="project" value="RGD"/>
</dbReference>
<dbReference type="GO" id="GO:0043565">
    <property type="term" value="F:sequence-specific DNA binding"/>
    <property type="evidence" value="ECO:0000315"/>
    <property type="project" value="RGD"/>
</dbReference>
<dbReference type="GO" id="GO:1990837">
    <property type="term" value="F:sequence-specific double-stranded DNA binding"/>
    <property type="evidence" value="ECO:0000266"/>
    <property type="project" value="RGD"/>
</dbReference>
<dbReference type="GO" id="GO:0005102">
    <property type="term" value="F:signaling receptor binding"/>
    <property type="evidence" value="ECO:0000266"/>
    <property type="project" value="RGD"/>
</dbReference>
<dbReference type="GO" id="GO:0070540">
    <property type="term" value="F:stearic acid binding"/>
    <property type="evidence" value="ECO:0000314"/>
    <property type="project" value="RGD"/>
</dbReference>
<dbReference type="GO" id="GO:0000976">
    <property type="term" value="F:transcription cis-regulatory region binding"/>
    <property type="evidence" value="ECO:0000266"/>
    <property type="project" value="RGD"/>
</dbReference>
<dbReference type="GO" id="GO:0001221">
    <property type="term" value="F:transcription coregulator binding"/>
    <property type="evidence" value="ECO:0000353"/>
    <property type="project" value="BHF-UCL"/>
</dbReference>
<dbReference type="GO" id="GO:0001222">
    <property type="term" value="F:transcription corepressor binding"/>
    <property type="evidence" value="ECO:0000353"/>
    <property type="project" value="RGD"/>
</dbReference>
<dbReference type="GO" id="GO:0008270">
    <property type="term" value="F:zinc ion binding"/>
    <property type="evidence" value="ECO:0007669"/>
    <property type="project" value="UniProtKB-KW"/>
</dbReference>
<dbReference type="GO" id="GO:0006637">
    <property type="term" value="P:acyl-CoA metabolic process"/>
    <property type="evidence" value="ECO:0000314"/>
    <property type="project" value="RGD"/>
</dbReference>
<dbReference type="GO" id="GO:0007596">
    <property type="term" value="P:blood coagulation"/>
    <property type="evidence" value="ECO:0000266"/>
    <property type="project" value="RGD"/>
</dbReference>
<dbReference type="GO" id="GO:0030154">
    <property type="term" value="P:cell differentiation"/>
    <property type="evidence" value="ECO:0000315"/>
    <property type="project" value="RGD"/>
</dbReference>
<dbReference type="GO" id="GO:0045216">
    <property type="term" value="P:cell-cell junction organization"/>
    <property type="evidence" value="ECO:0000314"/>
    <property type="project" value="RGD"/>
</dbReference>
<dbReference type="GO" id="GO:0071456">
    <property type="term" value="P:cellular response to hypoxia"/>
    <property type="evidence" value="ECO:0000270"/>
    <property type="project" value="RGD"/>
</dbReference>
<dbReference type="GO" id="GO:0042632">
    <property type="term" value="P:cholesterol homeostasis"/>
    <property type="evidence" value="ECO:0000266"/>
    <property type="project" value="RGD"/>
</dbReference>
<dbReference type="GO" id="GO:0007164">
    <property type="term" value="P:establishment of tissue polarity"/>
    <property type="evidence" value="ECO:0000314"/>
    <property type="project" value="RGD"/>
</dbReference>
<dbReference type="GO" id="GO:0042593">
    <property type="term" value="P:glucose homeostasis"/>
    <property type="evidence" value="ECO:0000266"/>
    <property type="project" value="RGD"/>
</dbReference>
<dbReference type="GO" id="GO:0070365">
    <property type="term" value="P:hepatocyte differentiation"/>
    <property type="evidence" value="ECO:0000270"/>
    <property type="project" value="RGD"/>
</dbReference>
<dbReference type="GO" id="GO:0055088">
    <property type="term" value="P:lipid homeostasis"/>
    <property type="evidence" value="ECO:0000266"/>
    <property type="project" value="RGD"/>
</dbReference>
<dbReference type="GO" id="GO:0006629">
    <property type="term" value="P:lipid metabolic process"/>
    <property type="evidence" value="ECO:0000266"/>
    <property type="project" value="RGD"/>
</dbReference>
<dbReference type="GO" id="GO:0030308">
    <property type="term" value="P:negative regulation of cell growth"/>
    <property type="evidence" value="ECO:0000266"/>
    <property type="project" value="RGD"/>
</dbReference>
<dbReference type="GO" id="GO:0030336">
    <property type="term" value="P:negative regulation of cell migration"/>
    <property type="evidence" value="ECO:0000314"/>
    <property type="project" value="RGD"/>
</dbReference>
<dbReference type="GO" id="GO:0008285">
    <property type="term" value="P:negative regulation of cell population proliferation"/>
    <property type="evidence" value="ECO:0000314"/>
    <property type="project" value="RGD"/>
</dbReference>
<dbReference type="GO" id="GO:0045892">
    <property type="term" value="P:negative regulation of DNA-templated transcription"/>
    <property type="evidence" value="ECO:0000250"/>
    <property type="project" value="UniProtKB"/>
</dbReference>
<dbReference type="GO" id="GO:0045930">
    <property type="term" value="P:negative regulation of mitotic cell cycle"/>
    <property type="evidence" value="ECO:0000314"/>
    <property type="project" value="RGD"/>
</dbReference>
<dbReference type="GO" id="GO:0042308">
    <property type="term" value="P:negative regulation of protein import into nucleus"/>
    <property type="evidence" value="ECO:0000314"/>
    <property type="project" value="RGD"/>
</dbReference>
<dbReference type="GO" id="GO:0055091">
    <property type="term" value="P:phospholipid homeostasis"/>
    <property type="evidence" value="ECO:0000266"/>
    <property type="project" value="RGD"/>
</dbReference>
<dbReference type="GO" id="GO:0045893">
    <property type="term" value="P:positive regulation of DNA-templated transcription"/>
    <property type="evidence" value="ECO:0000266"/>
    <property type="project" value="RGD"/>
</dbReference>
<dbReference type="GO" id="GO:0045723">
    <property type="term" value="P:positive regulation of fatty acid biosynthetic process"/>
    <property type="evidence" value="ECO:0000315"/>
    <property type="project" value="RGD"/>
</dbReference>
<dbReference type="GO" id="GO:0010628">
    <property type="term" value="P:positive regulation of gene expression"/>
    <property type="evidence" value="ECO:0000315"/>
    <property type="project" value="RGD"/>
</dbReference>
<dbReference type="GO" id="GO:0045722">
    <property type="term" value="P:positive regulation of gluconeogenesis"/>
    <property type="evidence" value="ECO:0000314"/>
    <property type="project" value="BHF-UCL"/>
</dbReference>
<dbReference type="GO" id="GO:0045944">
    <property type="term" value="P:positive regulation of transcription by RNA polymerase II"/>
    <property type="evidence" value="ECO:0000314"/>
    <property type="project" value="BHF-UCL"/>
</dbReference>
<dbReference type="GO" id="GO:0042752">
    <property type="term" value="P:regulation of circadian rhythm"/>
    <property type="evidence" value="ECO:0000250"/>
    <property type="project" value="UniProtKB"/>
</dbReference>
<dbReference type="GO" id="GO:0006355">
    <property type="term" value="P:regulation of DNA-templated transcription"/>
    <property type="evidence" value="ECO:0000266"/>
    <property type="project" value="RGD"/>
</dbReference>
<dbReference type="GO" id="GO:0010470">
    <property type="term" value="P:regulation of gastrulation"/>
    <property type="evidence" value="ECO:0000266"/>
    <property type="project" value="RGD"/>
</dbReference>
<dbReference type="GO" id="GO:0050796">
    <property type="term" value="P:regulation of insulin secretion"/>
    <property type="evidence" value="ECO:0000266"/>
    <property type="project" value="RGD"/>
</dbReference>
<dbReference type="GO" id="GO:0019216">
    <property type="term" value="P:regulation of lipid metabolic process"/>
    <property type="evidence" value="ECO:0000266"/>
    <property type="project" value="RGD"/>
</dbReference>
<dbReference type="GO" id="GO:0032534">
    <property type="term" value="P:regulation of microvillus assembly"/>
    <property type="evidence" value="ECO:0000315"/>
    <property type="project" value="RGD"/>
</dbReference>
<dbReference type="GO" id="GO:0090368">
    <property type="term" value="P:regulation of ornithine metabolic process"/>
    <property type="evidence" value="ECO:0000266"/>
    <property type="project" value="RGD"/>
</dbReference>
<dbReference type="GO" id="GO:0006357">
    <property type="term" value="P:regulation of transcription by RNA polymerase II"/>
    <property type="evidence" value="ECO:0000266"/>
    <property type="project" value="RGD"/>
</dbReference>
<dbReference type="GO" id="GO:0051591">
    <property type="term" value="P:response to cAMP"/>
    <property type="evidence" value="ECO:0000270"/>
    <property type="project" value="RGD"/>
</dbReference>
<dbReference type="GO" id="GO:0071548">
    <property type="term" value="P:response to dexamethasone"/>
    <property type="evidence" value="ECO:0000270"/>
    <property type="project" value="RGD"/>
</dbReference>
<dbReference type="GO" id="GO:0009749">
    <property type="term" value="P:response to glucose"/>
    <property type="evidence" value="ECO:0000314"/>
    <property type="project" value="RGD"/>
</dbReference>
<dbReference type="GO" id="GO:0032496">
    <property type="term" value="P:response to lipopolysaccharide"/>
    <property type="evidence" value="ECO:0000270"/>
    <property type="project" value="RGD"/>
</dbReference>
<dbReference type="GO" id="GO:0031667">
    <property type="term" value="P:response to nutrient levels"/>
    <property type="evidence" value="ECO:0000270"/>
    <property type="project" value="RGD"/>
</dbReference>
<dbReference type="GO" id="GO:0035983">
    <property type="term" value="P:response to trichostatin A"/>
    <property type="evidence" value="ECO:0000314"/>
    <property type="project" value="RGD"/>
</dbReference>
<dbReference type="GO" id="GO:0009410">
    <property type="term" value="P:response to xenobiotic stimulus"/>
    <property type="evidence" value="ECO:0000270"/>
    <property type="project" value="RGD"/>
</dbReference>
<dbReference type="GO" id="GO:0048511">
    <property type="term" value="P:rhythmic process"/>
    <property type="evidence" value="ECO:0007669"/>
    <property type="project" value="UniProtKB-KW"/>
</dbReference>
<dbReference type="GO" id="GO:0007548">
    <property type="term" value="P:sex differentiation"/>
    <property type="evidence" value="ECO:0000266"/>
    <property type="project" value="RGD"/>
</dbReference>
<dbReference type="GO" id="GO:0023019">
    <property type="term" value="P:signal transduction involved in regulation of gene expression"/>
    <property type="evidence" value="ECO:0000266"/>
    <property type="project" value="RGD"/>
</dbReference>
<dbReference type="GO" id="GO:0006366">
    <property type="term" value="P:transcription by RNA polymerase II"/>
    <property type="evidence" value="ECO:0000266"/>
    <property type="project" value="RGD"/>
</dbReference>
<dbReference type="GO" id="GO:0070328">
    <property type="term" value="P:triglyceride homeostasis"/>
    <property type="evidence" value="ECO:0000266"/>
    <property type="project" value="RGD"/>
</dbReference>
<dbReference type="GO" id="GO:0006805">
    <property type="term" value="P:xenobiotic metabolic process"/>
    <property type="evidence" value="ECO:0000266"/>
    <property type="project" value="RGD"/>
</dbReference>
<dbReference type="CDD" id="cd06960">
    <property type="entry name" value="NR_DBD_HNF4A"/>
    <property type="match status" value="1"/>
</dbReference>
<dbReference type="CDD" id="cd06931">
    <property type="entry name" value="NR_LBD_HNF4_like"/>
    <property type="match status" value="1"/>
</dbReference>
<dbReference type="DisProt" id="DP02610"/>
<dbReference type="FunFam" id="1.10.565.10:FF:000007">
    <property type="entry name" value="Hepatocyte nuclear factor 4 alpha"/>
    <property type="match status" value="1"/>
</dbReference>
<dbReference type="FunFam" id="3.30.50.10:FF:000012">
    <property type="entry name" value="Hepatocyte nuclear factor 4, alpha"/>
    <property type="match status" value="1"/>
</dbReference>
<dbReference type="Gene3D" id="3.30.50.10">
    <property type="entry name" value="Erythroid Transcription Factor GATA-1, subunit A"/>
    <property type="match status" value="1"/>
</dbReference>
<dbReference type="Gene3D" id="1.10.565.10">
    <property type="entry name" value="Retinoid X Receptor"/>
    <property type="match status" value="1"/>
</dbReference>
<dbReference type="InterPro" id="IPR049636">
    <property type="entry name" value="HNF4-like_DBD"/>
</dbReference>
<dbReference type="InterPro" id="IPR049635">
    <property type="entry name" value="HNF4_LBD"/>
</dbReference>
<dbReference type="InterPro" id="IPR035500">
    <property type="entry name" value="NHR-like_dom_sf"/>
</dbReference>
<dbReference type="InterPro" id="IPR000536">
    <property type="entry name" value="Nucl_hrmn_rcpt_lig-bd"/>
</dbReference>
<dbReference type="InterPro" id="IPR050274">
    <property type="entry name" value="Nuclear_hormone_rcpt_NR2"/>
</dbReference>
<dbReference type="InterPro" id="IPR001723">
    <property type="entry name" value="Nuclear_hrmn_rcpt"/>
</dbReference>
<dbReference type="InterPro" id="IPR001628">
    <property type="entry name" value="Znf_hrmn_rcpt"/>
</dbReference>
<dbReference type="InterPro" id="IPR013088">
    <property type="entry name" value="Znf_NHR/GATA"/>
</dbReference>
<dbReference type="PANTHER" id="PTHR24083">
    <property type="entry name" value="NUCLEAR HORMONE RECEPTOR"/>
    <property type="match status" value="1"/>
</dbReference>
<dbReference type="Pfam" id="PF00104">
    <property type="entry name" value="Hormone_recep"/>
    <property type="match status" value="1"/>
</dbReference>
<dbReference type="Pfam" id="PF00105">
    <property type="entry name" value="zf-C4"/>
    <property type="match status" value="1"/>
</dbReference>
<dbReference type="PRINTS" id="PR01282">
    <property type="entry name" value="COUPTNFACTOR"/>
</dbReference>
<dbReference type="PRINTS" id="PR00398">
    <property type="entry name" value="STRDHORMONER"/>
</dbReference>
<dbReference type="PRINTS" id="PR00047">
    <property type="entry name" value="STROIDFINGER"/>
</dbReference>
<dbReference type="SMART" id="SM00430">
    <property type="entry name" value="HOLI"/>
    <property type="match status" value="1"/>
</dbReference>
<dbReference type="SMART" id="SM00399">
    <property type="entry name" value="ZnF_C4"/>
    <property type="match status" value="1"/>
</dbReference>
<dbReference type="SUPFAM" id="SSF57716">
    <property type="entry name" value="Glucocorticoid receptor-like (DNA-binding domain)"/>
    <property type="match status" value="1"/>
</dbReference>
<dbReference type="SUPFAM" id="SSF48508">
    <property type="entry name" value="Nuclear receptor ligand-binding domain"/>
    <property type="match status" value="1"/>
</dbReference>
<dbReference type="PROSITE" id="PS51843">
    <property type="entry name" value="NR_LBD"/>
    <property type="match status" value="1"/>
</dbReference>
<dbReference type="PROSITE" id="PS00031">
    <property type="entry name" value="NUCLEAR_REC_DBD_1"/>
    <property type="match status" value="1"/>
</dbReference>
<dbReference type="PROSITE" id="PS51030">
    <property type="entry name" value="NUCLEAR_REC_DBD_2"/>
    <property type="match status" value="1"/>
</dbReference>
<sequence>MRLSKTLADMDMADYSAALDPAYTTLEFENVQVLTMGNDTSPSEGANLNSSNSLGVSALCAICGDRATGKHYGASSCDGCKGFFRRSVRKNHMYSCRFSRQCVVDKDKRNQCRYCRLKKCFRAGMKKEAVQNERDRISTRRSSYEDSSLPSINALLQAEVLSQQITSPISGINGDIRAKKIANITDVCESMKEQLLVLVEWAKYIPAFCELLLDDQVALLRAHAGEHLLLGATKRSMVFKDVLLLGNDYIVPRHCPELAEMSRVSIRILDELVLPFQELQIDDNEYACLKAIIFFDPDAKGLSDPGKIKRLRSQVQVSLEDYINDRQYDSRGRFGELLLLLPTLQSITWQMIEQIQFIKLFGMAKIDNLLQEMLLGGSASDAPHAHHPLHPHLMQEHMGTNVIVANTMPSHLSNGQMCEWPRPRGQAATPETPQPSPPSGSGSESYKLLPGAITTIVKPPSAIPQPTITKQEAI</sequence>
<gene>
    <name type="primary">Hnf4a</name>
    <name type="synonym">Hnf-4</name>
    <name type="synonym">Hnf4</name>
    <name type="synonym">Nr2a1</name>
    <name type="synonym">Tcf14</name>
</gene>
<evidence type="ECO:0000250" key="1"/>
<evidence type="ECO:0000250" key="2">
    <source>
        <dbReference type="UniProtKB" id="P41235"/>
    </source>
</evidence>
<evidence type="ECO:0000250" key="3">
    <source>
        <dbReference type="UniProtKB" id="P49698"/>
    </source>
</evidence>
<evidence type="ECO:0000255" key="4">
    <source>
        <dbReference type="PROSITE-ProRule" id="PRU00407"/>
    </source>
</evidence>
<evidence type="ECO:0000255" key="5">
    <source>
        <dbReference type="PROSITE-ProRule" id="PRU01189"/>
    </source>
</evidence>
<evidence type="ECO:0000256" key="6">
    <source>
        <dbReference type="SAM" id="MobiDB-lite"/>
    </source>
</evidence>
<evidence type="ECO:0000269" key="7">
    <source>
    </source>
</evidence>
<evidence type="ECO:0000269" key="8">
    <source>
    </source>
</evidence>
<evidence type="ECO:0000303" key="9">
    <source>
    </source>
</evidence>
<evidence type="ECO:0000303" key="10">
    <source ref="3"/>
</evidence>
<evidence type="ECO:0000305" key="11"/>
<evidence type="ECO:0000305" key="12">
    <source>
    </source>
</evidence>
<evidence type="ECO:0007744" key="13">
    <source>
    </source>
</evidence>
<evidence type="ECO:0007829" key="14">
    <source>
        <dbReference type="PDB" id="1M7W"/>
    </source>
</evidence>
<comment type="function">
    <text evidence="2 3">Transcriptional regulator which controls the expression of hepatic genes during the transition of endodermal cells to hepatic progenitor cells, facilitating the recruitment of RNA pol II to the promoters of target genes (By similarity). Activates the transcription of CYP2C38 (By similarity). Represses the CLOCK-BMAL1 transcriptional activity and is essential for circadian rhythm maintenance and period regulation in the liver and colon cells (By similarity).</text>
</comment>
<comment type="subunit">
    <text evidence="2 7">Homodimerization is required for HNF4-alpha to bind to its recognition site (PubMed:12193589). Interacts with CLOCK, BMAL1, CRY1, CRY2, PER1 and PER2 (By similarity). Interacts with NR0B2/SHP; the resulting heterodimer is transcriptionally inactive (By similarity). Interacts with DDX3X; this interaction disrupts the interaction between HNF4 and NR0B2 that forms inactive heterodimers and enhances the formation of active HNF4 homodimers (By similarity).</text>
</comment>
<comment type="interaction">
    <interactant intactId="EBI-5261592">
        <id>P22449</id>
    </interactant>
    <interactant intactId="EBI-1209448">
        <id>P02692</id>
        <label>Fabp1</label>
    </interactant>
    <organismsDiffer>false</organismsDiffer>
    <experiments>3</experiments>
</comment>
<comment type="subcellular location">
    <subcellularLocation>
        <location>Nucleus</location>
    </subcellularLocation>
</comment>
<comment type="alternative products">
    <event type="alternative splicing"/>
    <isoform>
        <id>P22449-1</id>
        <name>Long</name>
        <sequence type="displayed"/>
    </isoform>
    <isoform>
        <id>P22449-2</id>
        <name>Short</name>
        <sequence type="described" ref="VSP_003677"/>
    </isoform>
</comment>
<comment type="tissue specificity">
    <text>Liver, kidney and intestine.</text>
</comment>
<comment type="domain">
    <text evidence="2">The 9aaTAD motif is a transactivation domain present in a large number of yeast and animal transcription factors.</text>
</comment>
<comment type="PTM">
    <text evidence="1 8">Phosphorylation at Ser-313 by AMPK reduces the ability to form homodimers and bind DNA (By similarity). Phosphorylated in the recognition sequence R-R-S-S near the DNA-binding domain; phosphorylation results in decrease in DNA-binding activity. Phosphorylation of HNF4 depends on the diet and is decreased by a carbohydrate-rich diet and is increased by fasting.</text>
</comment>
<comment type="PTM">
    <text>The N-terminus is blocked.</text>
</comment>
<comment type="PTM">
    <text evidence="1">Acetylation at Lys-458 lowers transcriptional activation by about two-fold.</text>
</comment>
<comment type="miscellaneous">
    <text>DNA-binding activity of phosphorylated protein is reduced by fasting and by inducers of intracellular cyclic AMP.</text>
</comment>
<comment type="miscellaneous">
    <text>Binds fatty acids.</text>
</comment>
<comment type="similarity">
    <text evidence="11">Belongs to the nuclear hormone receptor family. NR2 subfamily.</text>
</comment>
<comment type="sequence caution" evidence="11">
    <conflict type="erroneous initiation">
        <sequence resource="EMBL-CDS" id="BAA01411"/>
    </conflict>
    <text>Truncated N-terminus.</text>
</comment>
<comment type="sequence caution" evidence="11">
    <conflict type="erroneous initiation">
        <sequence resource="EMBL-CDS" id="CAA40412"/>
    </conflict>
    <text>Truncated N-terminus.</text>
</comment>
<name>HNF4A_RAT</name>